<sequence length="434" mass="46268">MDYLDLGPYSSASGTVRLPGSKSISNRVLLLAALAEGETTITNLLDSDDTRVMLDALGKLGVKLARDGDTCVVTGTRGAFTAKTADLFLGNAGTAVRPLTAALAVNGGDYRVHGVPRMHERPIGDLVDGLRQIGAQIDYELSEGYPPLRIKPATISVDAPIRVRGDVSSQFLTALLMTLPLVKAKDGQAVVEVDGELISKPYVDITIRLMARFGVTVERDGWQRFVVPAGVRYRSPGRIMVEGDASSASYFLAAGALGGGPLRVEGVGRASIQGDVGFANALMQMGANVTMGDDWIDVRGIGHDRGKLEPIDMDFNLIPDAAMTIAVAALFANGTSTLRNIASWRVKETDRIAAMATELRKVGAIVEEGPDYLVVTPPEKLTPNAAIDTYDDHRMAMCFSLVSLGGVPVRINDPKCVGKTFPDYFDRFAALAKA</sequence>
<feature type="chain" id="PRO_1000012416" description="3-phosphoshikimate 1-carboxyvinyltransferase">
    <location>
        <begin position="1"/>
        <end position="434"/>
    </location>
</feature>
<feature type="active site" description="Proton acceptor" evidence="1">
    <location>
        <position position="320"/>
    </location>
</feature>
<feature type="binding site" evidence="1">
    <location>
        <position position="22"/>
    </location>
    <ligand>
        <name>3-phosphoshikimate</name>
        <dbReference type="ChEBI" id="CHEBI:145989"/>
    </ligand>
</feature>
<feature type="binding site" evidence="1">
    <location>
        <position position="22"/>
    </location>
    <ligand>
        <name>phosphoenolpyruvate</name>
        <dbReference type="ChEBI" id="CHEBI:58702"/>
    </ligand>
</feature>
<feature type="binding site" evidence="1">
    <location>
        <position position="23"/>
    </location>
    <ligand>
        <name>3-phosphoshikimate</name>
        <dbReference type="ChEBI" id="CHEBI:145989"/>
    </ligand>
</feature>
<feature type="binding site" evidence="1">
    <location>
        <position position="27"/>
    </location>
    <ligand>
        <name>3-phosphoshikimate</name>
        <dbReference type="ChEBI" id="CHEBI:145989"/>
    </ligand>
</feature>
<feature type="binding site" evidence="1">
    <location>
        <position position="93"/>
    </location>
    <ligand>
        <name>phosphoenolpyruvate</name>
        <dbReference type="ChEBI" id="CHEBI:58702"/>
    </ligand>
</feature>
<feature type="binding site" evidence="1">
    <location>
        <position position="121"/>
    </location>
    <ligand>
        <name>phosphoenolpyruvate</name>
        <dbReference type="ChEBI" id="CHEBI:58702"/>
    </ligand>
</feature>
<feature type="binding site" evidence="1">
    <location>
        <position position="168"/>
    </location>
    <ligand>
        <name>3-phosphoshikimate</name>
        <dbReference type="ChEBI" id="CHEBI:145989"/>
    </ligand>
</feature>
<feature type="binding site" evidence="1">
    <location>
        <position position="169"/>
    </location>
    <ligand>
        <name>3-phosphoshikimate</name>
        <dbReference type="ChEBI" id="CHEBI:145989"/>
    </ligand>
</feature>
<feature type="binding site" evidence="1">
    <location>
        <position position="170"/>
    </location>
    <ligand>
        <name>3-phosphoshikimate</name>
        <dbReference type="ChEBI" id="CHEBI:145989"/>
    </ligand>
</feature>
<feature type="binding site" evidence="1">
    <location>
        <position position="170"/>
    </location>
    <ligand>
        <name>phosphoenolpyruvate</name>
        <dbReference type="ChEBI" id="CHEBI:58702"/>
    </ligand>
</feature>
<feature type="binding site" evidence="1">
    <location>
        <position position="199"/>
    </location>
    <ligand>
        <name>3-phosphoshikimate</name>
        <dbReference type="ChEBI" id="CHEBI:145989"/>
    </ligand>
</feature>
<feature type="binding site" evidence="1">
    <location>
        <position position="320"/>
    </location>
    <ligand>
        <name>3-phosphoshikimate</name>
        <dbReference type="ChEBI" id="CHEBI:145989"/>
    </ligand>
</feature>
<feature type="binding site" evidence="1">
    <location>
        <position position="347"/>
    </location>
    <ligand>
        <name>3-phosphoshikimate</name>
        <dbReference type="ChEBI" id="CHEBI:145989"/>
    </ligand>
</feature>
<feature type="binding site" evidence="1">
    <location>
        <position position="351"/>
    </location>
    <ligand>
        <name>phosphoenolpyruvate</name>
        <dbReference type="ChEBI" id="CHEBI:58702"/>
    </ligand>
</feature>
<feature type="binding site" evidence="1">
    <location>
        <position position="394"/>
    </location>
    <ligand>
        <name>phosphoenolpyruvate</name>
        <dbReference type="ChEBI" id="CHEBI:58702"/>
    </ligand>
</feature>
<feature type="binding site" evidence="1">
    <location>
        <position position="419"/>
    </location>
    <ligand>
        <name>phosphoenolpyruvate</name>
        <dbReference type="ChEBI" id="CHEBI:58702"/>
    </ligand>
</feature>
<accession>Q1BY28</accession>
<reference key="1">
    <citation type="submission" date="2006-05" db="EMBL/GenBank/DDBJ databases">
        <title>Complete sequence of chromosome 1 of Burkholderia cenocepacia AU 1054.</title>
        <authorList>
            <consortium name="US DOE Joint Genome Institute"/>
            <person name="Copeland A."/>
            <person name="Lucas S."/>
            <person name="Lapidus A."/>
            <person name="Barry K."/>
            <person name="Detter J.C."/>
            <person name="Glavina del Rio T."/>
            <person name="Hammon N."/>
            <person name="Israni S."/>
            <person name="Dalin E."/>
            <person name="Tice H."/>
            <person name="Pitluck S."/>
            <person name="Chain P."/>
            <person name="Malfatti S."/>
            <person name="Shin M."/>
            <person name="Vergez L."/>
            <person name="Schmutz J."/>
            <person name="Larimer F."/>
            <person name="Land M."/>
            <person name="Hauser L."/>
            <person name="Kyrpides N."/>
            <person name="Lykidis A."/>
            <person name="LiPuma J.J."/>
            <person name="Konstantinidis K."/>
            <person name="Tiedje J.M."/>
            <person name="Richardson P."/>
        </authorList>
    </citation>
    <scope>NUCLEOTIDE SEQUENCE [LARGE SCALE GENOMIC DNA]</scope>
    <source>
        <strain>AU 1054</strain>
    </source>
</reference>
<gene>
    <name evidence="1" type="primary">aroA</name>
    <name type="ordered locus">Bcen_0566</name>
</gene>
<organism>
    <name type="scientific">Burkholderia orbicola (strain AU 1054)</name>
    <dbReference type="NCBI Taxonomy" id="331271"/>
    <lineage>
        <taxon>Bacteria</taxon>
        <taxon>Pseudomonadati</taxon>
        <taxon>Pseudomonadota</taxon>
        <taxon>Betaproteobacteria</taxon>
        <taxon>Burkholderiales</taxon>
        <taxon>Burkholderiaceae</taxon>
        <taxon>Burkholderia</taxon>
        <taxon>Burkholderia cepacia complex</taxon>
        <taxon>Burkholderia orbicola</taxon>
    </lineage>
</organism>
<keyword id="KW-0028">Amino-acid biosynthesis</keyword>
<keyword id="KW-0057">Aromatic amino acid biosynthesis</keyword>
<keyword id="KW-0963">Cytoplasm</keyword>
<keyword id="KW-0808">Transferase</keyword>
<comment type="function">
    <text evidence="1">Catalyzes the transfer of the enolpyruvyl moiety of phosphoenolpyruvate (PEP) to the 5-hydroxyl of shikimate-3-phosphate (S3P) to produce enolpyruvyl shikimate-3-phosphate and inorganic phosphate.</text>
</comment>
<comment type="catalytic activity">
    <reaction evidence="1">
        <text>3-phosphoshikimate + phosphoenolpyruvate = 5-O-(1-carboxyvinyl)-3-phosphoshikimate + phosphate</text>
        <dbReference type="Rhea" id="RHEA:21256"/>
        <dbReference type="ChEBI" id="CHEBI:43474"/>
        <dbReference type="ChEBI" id="CHEBI:57701"/>
        <dbReference type="ChEBI" id="CHEBI:58702"/>
        <dbReference type="ChEBI" id="CHEBI:145989"/>
        <dbReference type="EC" id="2.5.1.19"/>
    </reaction>
    <physiologicalReaction direction="left-to-right" evidence="1">
        <dbReference type="Rhea" id="RHEA:21257"/>
    </physiologicalReaction>
</comment>
<comment type="pathway">
    <text evidence="1">Metabolic intermediate biosynthesis; chorismate biosynthesis; chorismate from D-erythrose 4-phosphate and phosphoenolpyruvate: step 6/7.</text>
</comment>
<comment type="subunit">
    <text evidence="1">Monomer.</text>
</comment>
<comment type="subcellular location">
    <subcellularLocation>
        <location evidence="1">Cytoplasm</location>
    </subcellularLocation>
</comment>
<comment type="similarity">
    <text evidence="1">Belongs to the EPSP synthase family.</text>
</comment>
<evidence type="ECO:0000255" key="1">
    <source>
        <dbReference type="HAMAP-Rule" id="MF_00210"/>
    </source>
</evidence>
<dbReference type="EC" id="2.5.1.19" evidence="1"/>
<dbReference type="EMBL" id="CP000378">
    <property type="protein sequence ID" value="ABF75477.1"/>
    <property type="molecule type" value="Genomic_DNA"/>
</dbReference>
<dbReference type="SMR" id="Q1BY28"/>
<dbReference type="HOGENOM" id="CLU_024321_0_0_4"/>
<dbReference type="UniPathway" id="UPA00053">
    <property type="reaction ID" value="UER00089"/>
</dbReference>
<dbReference type="GO" id="GO:0005737">
    <property type="term" value="C:cytoplasm"/>
    <property type="evidence" value="ECO:0007669"/>
    <property type="project" value="UniProtKB-SubCell"/>
</dbReference>
<dbReference type="GO" id="GO:0003866">
    <property type="term" value="F:3-phosphoshikimate 1-carboxyvinyltransferase activity"/>
    <property type="evidence" value="ECO:0007669"/>
    <property type="project" value="UniProtKB-UniRule"/>
</dbReference>
<dbReference type="GO" id="GO:0008652">
    <property type="term" value="P:amino acid biosynthetic process"/>
    <property type="evidence" value="ECO:0007669"/>
    <property type="project" value="UniProtKB-KW"/>
</dbReference>
<dbReference type="GO" id="GO:0009073">
    <property type="term" value="P:aromatic amino acid family biosynthetic process"/>
    <property type="evidence" value="ECO:0007669"/>
    <property type="project" value="UniProtKB-KW"/>
</dbReference>
<dbReference type="GO" id="GO:0009423">
    <property type="term" value="P:chorismate biosynthetic process"/>
    <property type="evidence" value="ECO:0007669"/>
    <property type="project" value="UniProtKB-UniRule"/>
</dbReference>
<dbReference type="CDD" id="cd01556">
    <property type="entry name" value="EPSP_synthase"/>
    <property type="match status" value="1"/>
</dbReference>
<dbReference type="FunFam" id="3.65.10.10:FF:000003">
    <property type="entry name" value="3-phosphoshikimate 1-carboxyvinyltransferase"/>
    <property type="match status" value="1"/>
</dbReference>
<dbReference type="FunFam" id="3.65.10.10:FF:000004">
    <property type="entry name" value="3-phosphoshikimate 1-carboxyvinyltransferase"/>
    <property type="match status" value="1"/>
</dbReference>
<dbReference type="Gene3D" id="3.65.10.10">
    <property type="entry name" value="Enolpyruvate transferase domain"/>
    <property type="match status" value="2"/>
</dbReference>
<dbReference type="HAMAP" id="MF_00210">
    <property type="entry name" value="EPSP_synth"/>
    <property type="match status" value="1"/>
</dbReference>
<dbReference type="InterPro" id="IPR001986">
    <property type="entry name" value="Enolpyruvate_Tfrase_dom"/>
</dbReference>
<dbReference type="InterPro" id="IPR036968">
    <property type="entry name" value="Enolpyruvate_Tfrase_sf"/>
</dbReference>
<dbReference type="InterPro" id="IPR006264">
    <property type="entry name" value="EPSP_synthase"/>
</dbReference>
<dbReference type="InterPro" id="IPR023193">
    <property type="entry name" value="EPSP_synthase_CS"/>
</dbReference>
<dbReference type="InterPro" id="IPR013792">
    <property type="entry name" value="RNA3'P_cycl/enolpyr_Trfase_a/b"/>
</dbReference>
<dbReference type="NCBIfam" id="TIGR01356">
    <property type="entry name" value="aroA"/>
    <property type="match status" value="1"/>
</dbReference>
<dbReference type="PANTHER" id="PTHR21090">
    <property type="entry name" value="AROM/DEHYDROQUINATE SYNTHASE"/>
    <property type="match status" value="1"/>
</dbReference>
<dbReference type="PANTHER" id="PTHR21090:SF5">
    <property type="entry name" value="PENTAFUNCTIONAL AROM POLYPEPTIDE"/>
    <property type="match status" value="1"/>
</dbReference>
<dbReference type="Pfam" id="PF00275">
    <property type="entry name" value="EPSP_synthase"/>
    <property type="match status" value="1"/>
</dbReference>
<dbReference type="PIRSF" id="PIRSF000505">
    <property type="entry name" value="EPSPS"/>
    <property type="match status" value="1"/>
</dbReference>
<dbReference type="SUPFAM" id="SSF55205">
    <property type="entry name" value="EPT/RTPC-like"/>
    <property type="match status" value="1"/>
</dbReference>
<dbReference type="PROSITE" id="PS00104">
    <property type="entry name" value="EPSP_SYNTHASE_1"/>
    <property type="match status" value="1"/>
</dbReference>
<dbReference type="PROSITE" id="PS00885">
    <property type="entry name" value="EPSP_SYNTHASE_2"/>
    <property type="match status" value="1"/>
</dbReference>
<name>AROA_BURO1</name>
<protein>
    <recommendedName>
        <fullName evidence="1">3-phosphoshikimate 1-carboxyvinyltransferase</fullName>
        <ecNumber evidence="1">2.5.1.19</ecNumber>
    </recommendedName>
    <alternativeName>
        <fullName evidence="1">5-enolpyruvylshikimate-3-phosphate synthase</fullName>
        <shortName evidence="1">EPSP synthase</shortName>
        <shortName evidence="1">EPSPS</shortName>
    </alternativeName>
</protein>
<proteinExistence type="inferred from homology"/>